<feature type="chain" id="PRO_0000100763" description="POU domain, class 6, transcription factor 2">
    <location>
        <begin position="1"/>
        <end position="691"/>
    </location>
</feature>
<feature type="domain" description="POU-specific" evidence="3">
    <location>
        <begin position="476"/>
        <end position="586"/>
    </location>
</feature>
<feature type="DNA-binding region" description="Homeobox" evidence="2">
    <location>
        <begin position="607"/>
        <end position="666"/>
    </location>
</feature>
<feature type="region of interest" description="Disordered" evidence="4">
    <location>
        <begin position="1"/>
        <end position="61"/>
    </location>
</feature>
<feature type="region of interest" description="Disordered" evidence="4">
    <location>
        <begin position="188"/>
        <end position="297"/>
    </location>
</feature>
<feature type="region of interest" description="Disordered" evidence="4">
    <location>
        <begin position="435"/>
        <end position="461"/>
    </location>
</feature>
<feature type="region of interest" description="Disordered" evidence="4">
    <location>
        <begin position="670"/>
        <end position="691"/>
    </location>
</feature>
<feature type="compositionally biased region" description="Basic and acidic residues" evidence="4">
    <location>
        <begin position="17"/>
        <end position="28"/>
    </location>
</feature>
<feature type="compositionally biased region" description="Low complexity" evidence="4">
    <location>
        <begin position="188"/>
        <end position="197"/>
    </location>
</feature>
<feature type="compositionally biased region" description="Low complexity" evidence="4">
    <location>
        <begin position="206"/>
        <end position="216"/>
    </location>
</feature>
<feature type="compositionally biased region" description="Pro residues" evidence="4">
    <location>
        <begin position="217"/>
        <end position="237"/>
    </location>
</feature>
<feature type="compositionally biased region" description="Low complexity" evidence="4">
    <location>
        <begin position="238"/>
        <end position="272"/>
    </location>
</feature>
<feature type="compositionally biased region" description="Polar residues" evidence="4">
    <location>
        <begin position="437"/>
        <end position="447"/>
    </location>
</feature>
<feature type="compositionally biased region" description="Low complexity" evidence="4">
    <location>
        <begin position="448"/>
        <end position="458"/>
    </location>
</feature>
<reference key="1">
    <citation type="journal article" date="2005" name="Science">
        <title>The transcriptional landscape of the mammalian genome.</title>
        <authorList>
            <person name="Carninci P."/>
            <person name="Kasukawa T."/>
            <person name="Katayama S."/>
            <person name="Gough J."/>
            <person name="Frith M.C."/>
            <person name="Maeda N."/>
            <person name="Oyama R."/>
            <person name="Ravasi T."/>
            <person name="Lenhard B."/>
            <person name="Wells C."/>
            <person name="Kodzius R."/>
            <person name="Shimokawa K."/>
            <person name="Bajic V.B."/>
            <person name="Brenner S.E."/>
            <person name="Batalov S."/>
            <person name="Forrest A.R."/>
            <person name="Zavolan M."/>
            <person name="Davis M.J."/>
            <person name="Wilming L.G."/>
            <person name="Aidinis V."/>
            <person name="Allen J.E."/>
            <person name="Ambesi-Impiombato A."/>
            <person name="Apweiler R."/>
            <person name="Aturaliya R.N."/>
            <person name="Bailey T.L."/>
            <person name="Bansal M."/>
            <person name="Baxter L."/>
            <person name="Beisel K.W."/>
            <person name="Bersano T."/>
            <person name="Bono H."/>
            <person name="Chalk A.M."/>
            <person name="Chiu K.P."/>
            <person name="Choudhary V."/>
            <person name="Christoffels A."/>
            <person name="Clutterbuck D.R."/>
            <person name="Crowe M.L."/>
            <person name="Dalla E."/>
            <person name="Dalrymple B.P."/>
            <person name="de Bono B."/>
            <person name="Della Gatta G."/>
            <person name="di Bernardo D."/>
            <person name="Down T."/>
            <person name="Engstrom P."/>
            <person name="Fagiolini M."/>
            <person name="Faulkner G."/>
            <person name="Fletcher C.F."/>
            <person name="Fukushima T."/>
            <person name="Furuno M."/>
            <person name="Futaki S."/>
            <person name="Gariboldi M."/>
            <person name="Georgii-Hemming P."/>
            <person name="Gingeras T.R."/>
            <person name="Gojobori T."/>
            <person name="Green R.E."/>
            <person name="Gustincich S."/>
            <person name="Harbers M."/>
            <person name="Hayashi Y."/>
            <person name="Hensch T.K."/>
            <person name="Hirokawa N."/>
            <person name="Hill D."/>
            <person name="Huminiecki L."/>
            <person name="Iacono M."/>
            <person name="Ikeo K."/>
            <person name="Iwama A."/>
            <person name="Ishikawa T."/>
            <person name="Jakt M."/>
            <person name="Kanapin A."/>
            <person name="Katoh M."/>
            <person name="Kawasawa Y."/>
            <person name="Kelso J."/>
            <person name="Kitamura H."/>
            <person name="Kitano H."/>
            <person name="Kollias G."/>
            <person name="Krishnan S.P."/>
            <person name="Kruger A."/>
            <person name="Kummerfeld S.K."/>
            <person name="Kurochkin I.V."/>
            <person name="Lareau L.F."/>
            <person name="Lazarevic D."/>
            <person name="Lipovich L."/>
            <person name="Liu J."/>
            <person name="Liuni S."/>
            <person name="McWilliam S."/>
            <person name="Madan Babu M."/>
            <person name="Madera M."/>
            <person name="Marchionni L."/>
            <person name="Matsuda H."/>
            <person name="Matsuzawa S."/>
            <person name="Miki H."/>
            <person name="Mignone F."/>
            <person name="Miyake S."/>
            <person name="Morris K."/>
            <person name="Mottagui-Tabar S."/>
            <person name="Mulder N."/>
            <person name="Nakano N."/>
            <person name="Nakauchi H."/>
            <person name="Ng P."/>
            <person name="Nilsson R."/>
            <person name="Nishiguchi S."/>
            <person name="Nishikawa S."/>
            <person name="Nori F."/>
            <person name="Ohara O."/>
            <person name="Okazaki Y."/>
            <person name="Orlando V."/>
            <person name="Pang K.C."/>
            <person name="Pavan W.J."/>
            <person name="Pavesi G."/>
            <person name="Pesole G."/>
            <person name="Petrovsky N."/>
            <person name="Piazza S."/>
            <person name="Reed J."/>
            <person name="Reid J.F."/>
            <person name="Ring B.Z."/>
            <person name="Ringwald M."/>
            <person name="Rost B."/>
            <person name="Ruan Y."/>
            <person name="Salzberg S.L."/>
            <person name="Sandelin A."/>
            <person name="Schneider C."/>
            <person name="Schoenbach C."/>
            <person name="Sekiguchi K."/>
            <person name="Semple C.A."/>
            <person name="Seno S."/>
            <person name="Sessa L."/>
            <person name="Sheng Y."/>
            <person name="Shibata Y."/>
            <person name="Shimada H."/>
            <person name="Shimada K."/>
            <person name="Silva D."/>
            <person name="Sinclair B."/>
            <person name="Sperling S."/>
            <person name="Stupka E."/>
            <person name="Sugiura K."/>
            <person name="Sultana R."/>
            <person name="Takenaka Y."/>
            <person name="Taki K."/>
            <person name="Tammoja K."/>
            <person name="Tan S.L."/>
            <person name="Tang S."/>
            <person name="Taylor M.S."/>
            <person name="Tegner J."/>
            <person name="Teichmann S.A."/>
            <person name="Ueda H.R."/>
            <person name="van Nimwegen E."/>
            <person name="Verardo R."/>
            <person name="Wei C.L."/>
            <person name="Yagi K."/>
            <person name="Yamanishi H."/>
            <person name="Zabarovsky E."/>
            <person name="Zhu S."/>
            <person name="Zimmer A."/>
            <person name="Hide W."/>
            <person name="Bult C."/>
            <person name="Grimmond S.M."/>
            <person name="Teasdale R.D."/>
            <person name="Liu E.T."/>
            <person name="Brusic V."/>
            <person name="Quackenbush J."/>
            <person name="Wahlestedt C."/>
            <person name="Mattick J.S."/>
            <person name="Hume D.A."/>
            <person name="Kai C."/>
            <person name="Sasaki D."/>
            <person name="Tomaru Y."/>
            <person name="Fukuda S."/>
            <person name="Kanamori-Katayama M."/>
            <person name="Suzuki M."/>
            <person name="Aoki J."/>
            <person name="Arakawa T."/>
            <person name="Iida J."/>
            <person name="Imamura K."/>
            <person name="Itoh M."/>
            <person name="Kato T."/>
            <person name="Kawaji H."/>
            <person name="Kawagashira N."/>
            <person name="Kawashima T."/>
            <person name="Kojima M."/>
            <person name="Kondo S."/>
            <person name="Konno H."/>
            <person name="Nakano K."/>
            <person name="Ninomiya N."/>
            <person name="Nishio T."/>
            <person name="Okada M."/>
            <person name="Plessy C."/>
            <person name="Shibata K."/>
            <person name="Shiraki T."/>
            <person name="Suzuki S."/>
            <person name="Tagami M."/>
            <person name="Waki K."/>
            <person name="Watahiki A."/>
            <person name="Okamura-Oho Y."/>
            <person name="Suzuki H."/>
            <person name="Kawai J."/>
            <person name="Hayashizaki Y."/>
        </authorList>
    </citation>
    <scope>NUCLEOTIDE SEQUENCE [LARGE SCALE MRNA]</scope>
    <source>
        <strain>C57BL/6J</strain>
        <tissue>Spinal ganglion</tissue>
    </source>
</reference>
<reference key="2">
    <citation type="journal article" date="2001" name="Genes Chromosomes Cancer">
        <title>Refinement within single yeast artificial chromosome clones of a minimal region commonly deleted on the short arm of chromosome 7 in Wilms tumours.</title>
        <authorList>
            <person name="Perotti D."/>
            <person name="Testi M.A."/>
            <person name="Mondini P."/>
            <person name="Pilotti S."/>
            <person name="Green E.D."/>
            <person name="Pession A."/>
            <person name="Sozzi G."/>
            <person name="Pierotti M.A."/>
            <person name="Fossati-Bellani F."/>
            <person name="Radice P."/>
        </authorList>
    </citation>
    <scope>TISSUE SPECIFICITY</scope>
    <scope>DEVELOPMENTAL STAGE</scope>
</reference>
<gene>
    <name type="primary">Pou6f2</name>
</gene>
<evidence type="ECO:0000250" key="1"/>
<evidence type="ECO:0000255" key="2">
    <source>
        <dbReference type="PROSITE-ProRule" id="PRU00108"/>
    </source>
</evidence>
<evidence type="ECO:0000255" key="3">
    <source>
        <dbReference type="PROSITE-ProRule" id="PRU00530"/>
    </source>
</evidence>
<evidence type="ECO:0000256" key="4">
    <source>
        <dbReference type="SAM" id="MobiDB-lite"/>
    </source>
</evidence>
<evidence type="ECO:0000269" key="5">
    <source>
    </source>
</evidence>
<evidence type="ECO:0000305" key="6"/>
<accession>Q8BJI4</accession>
<protein>
    <recommendedName>
        <fullName>POU domain, class 6, transcription factor 2</fullName>
    </recommendedName>
</protein>
<keyword id="KW-0238">DNA-binding</keyword>
<keyword id="KW-0371">Homeobox</keyword>
<keyword id="KW-0539">Nucleus</keyword>
<keyword id="KW-1185">Reference proteome</keyword>
<keyword id="KW-0804">Transcription</keyword>
<keyword id="KW-0805">Transcription regulation</keyword>
<organism>
    <name type="scientific">Mus musculus</name>
    <name type="common">Mouse</name>
    <dbReference type="NCBI Taxonomy" id="10090"/>
    <lineage>
        <taxon>Eukaryota</taxon>
        <taxon>Metazoa</taxon>
        <taxon>Chordata</taxon>
        <taxon>Craniata</taxon>
        <taxon>Vertebrata</taxon>
        <taxon>Euteleostomi</taxon>
        <taxon>Mammalia</taxon>
        <taxon>Eutheria</taxon>
        <taxon>Euarchontoglires</taxon>
        <taxon>Glires</taxon>
        <taxon>Rodentia</taxon>
        <taxon>Myomorpha</taxon>
        <taxon>Muroidea</taxon>
        <taxon>Muridae</taxon>
        <taxon>Murinae</taxon>
        <taxon>Mus</taxon>
        <taxon>Mus</taxon>
    </lineage>
</organism>
<dbReference type="EMBL" id="AK083772">
    <property type="protein sequence ID" value="BAC39017.1"/>
    <property type="molecule type" value="mRNA"/>
</dbReference>
<dbReference type="RefSeq" id="NP_778171.2">
    <property type="nucleotide sequence ID" value="NM_175006.2"/>
</dbReference>
<dbReference type="SMR" id="Q8BJI4"/>
<dbReference type="BioGRID" id="229987">
    <property type="interactions" value="1"/>
</dbReference>
<dbReference type="FunCoup" id="Q8BJI4">
    <property type="interactions" value="65"/>
</dbReference>
<dbReference type="IntAct" id="Q8BJI4">
    <property type="interactions" value="1"/>
</dbReference>
<dbReference type="STRING" id="10090.ENSMUSP00000114173"/>
<dbReference type="GlyGen" id="Q8BJI4">
    <property type="glycosylation" value="4 sites"/>
</dbReference>
<dbReference type="PhosphoSitePlus" id="Q8BJI4"/>
<dbReference type="PaxDb" id="10090-ENSMUSP00000114173"/>
<dbReference type="DNASU" id="218030"/>
<dbReference type="GeneID" id="218030"/>
<dbReference type="KEGG" id="mmu:218030"/>
<dbReference type="UCSC" id="uc007poh.1">
    <property type="organism name" value="mouse"/>
</dbReference>
<dbReference type="AGR" id="MGI:2443631"/>
<dbReference type="CTD" id="11281"/>
<dbReference type="MGI" id="MGI:2443631">
    <property type="gene designation" value="Pou6f2"/>
</dbReference>
<dbReference type="eggNOG" id="KOG3802">
    <property type="taxonomic scope" value="Eukaryota"/>
</dbReference>
<dbReference type="InParanoid" id="Q8BJI4"/>
<dbReference type="OrthoDB" id="10066259at2759"/>
<dbReference type="PhylomeDB" id="Q8BJI4"/>
<dbReference type="BioGRID-ORCS" id="218030">
    <property type="hits" value="0 hits in 24 CRISPR screens"/>
</dbReference>
<dbReference type="ChiTaRS" id="Pou6f2">
    <property type="organism name" value="mouse"/>
</dbReference>
<dbReference type="PRO" id="PR:Q8BJI4"/>
<dbReference type="Proteomes" id="UP000000589">
    <property type="component" value="Unplaced"/>
</dbReference>
<dbReference type="RNAct" id="Q8BJI4">
    <property type="molecule type" value="protein"/>
</dbReference>
<dbReference type="GO" id="GO:0005634">
    <property type="term" value="C:nucleus"/>
    <property type="evidence" value="ECO:0007669"/>
    <property type="project" value="UniProtKB-SubCell"/>
</dbReference>
<dbReference type="GO" id="GO:0003677">
    <property type="term" value="F:DNA binding"/>
    <property type="evidence" value="ECO:0007669"/>
    <property type="project" value="UniProtKB-KW"/>
</dbReference>
<dbReference type="GO" id="GO:0003700">
    <property type="term" value="F:DNA-binding transcription factor activity"/>
    <property type="evidence" value="ECO:0007669"/>
    <property type="project" value="InterPro"/>
</dbReference>
<dbReference type="CDD" id="cd00086">
    <property type="entry name" value="homeodomain"/>
    <property type="match status" value="1"/>
</dbReference>
<dbReference type="FunFam" id="1.10.10.60:FF:000051">
    <property type="entry name" value="POU domain protein"/>
    <property type="match status" value="1"/>
</dbReference>
<dbReference type="Gene3D" id="1.10.10.60">
    <property type="entry name" value="Homeodomain-like"/>
    <property type="match status" value="1"/>
</dbReference>
<dbReference type="Gene3D" id="1.10.260.40">
    <property type="entry name" value="lambda repressor-like DNA-binding domains"/>
    <property type="match status" value="1"/>
</dbReference>
<dbReference type="InterPro" id="IPR001356">
    <property type="entry name" value="HD"/>
</dbReference>
<dbReference type="InterPro" id="IPR009057">
    <property type="entry name" value="Homeodomain-like_sf"/>
</dbReference>
<dbReference type="InterPro" id="IPR010982">
    <property type="entry name" value="Lambda_DNA-bd_dom_sf"/>
</dbReference>
<dbReference type="InterPro" id="IPR013847">
    <property type="entry name" value="POU"/>
</dbReference>
<dbReference type="InterPro" id="IPR000327">
    <property type="entry name" value="POU_dom"/>
</dbReference>
<dbReference type="InterPro" id="IPR050255">
    <property type="entry name" value="POU_domain_TF"/>
</dbReference>
<dbReference type="PANTHER" id="PTHR11636">
    <property type="entry name" value="POU DOMAIN"/>
    <property type="match status" value="1"/>
</dbReference>
<dbReference type="PANTHER" id="PTHR11636:SF68">
    <property type="entry name" value="POU DOMAIN, CLASS 6, TRANSCRIPTION FACTOR 2"/>
    <property type="match status" value="1"/>
</dbReference>
<dbReference type="Pfam" id="PF00046">
    <property type="entry name" value="Homeodomain"/>
    <property type="match status" value="1"/>
</dbReference>
<dbReference type="Pfam" id="PF00157">
    <property type="entry name" value="Pou"/>
    <property type="match status" value="2"/>
</dbReference>
<dbReference type="PRINTS" id="PR00028">
    <property type="entry name" value="POUDOMAIN"/>
</dbReference>
<dbReference type="SMART" id="SM00389">
    <property type="entry name" value="HOX"/>
    <property type="match status" value="1"/>
</dbReference>
<dbReference type="SMART" id="SM00352">
    <property type="entry name" value="POU"/>
    <property type="match status" value="1"/>
</dbReference>
<dbReference type="SUPFAM" id="SSF46689">
    <property type="entry name" value="Homeodomain-like"/>
    <property type="match status" value="1"/>
</dbReference>
<dbReference type="SUPFAM" id="SSF47413">
    <property type="entry name" value="lambda repressor-like DNA-binding domains"/>
    <property type="match status" value="1"/>
</dbReference>
<dbReference type="PROSITE" id="PS50071">
    <property type="entry name" value="HOMEOBOX_2"/>
    <property type="match status" value="1"/>
</dbReference>
<dbReference type="PROSITE" id="PS00035">
    <property type="entry name" value="POU_1"/>
    <property type="match status" value="1"/>
</dbReference>
<dbReference type="PROSITE" id="PS00465">
    <property type="entry name" value="POU_2"/>
    <property type="match status" value="1"/>
</dbReference>
<dbReference type="PROSITE" id="PS51179">
    <property type="entry name" value="POU_3"/>
    <property type="match status" value="1"/>
</dbReference>
<sequence>MIAGQVSKPLLSVRSEMNAELRGEDKAATSDSELNEPLLAPAESNDSEDTPSKLFGARGNTVLPDPGTPDQHQACQTHPTFPVGPQPLLTAQQLASAVAGVMPGGPPALNQPILIPFNMAGQLGGQQGLVLTLPTANLTNIQGLVAAAAAGGIMTLPLQNLQATSSLNSQLQQLQQLQLQQQQQQQQQQQQQQQQQQQPPPPPTSQHPQPASQAPPQSQPTPPHQPPPASQQLPAPPAQLEQATQPQQHQPHSHPQNQTQNQPSPTQQSSSPPQKPSPSPGHSLPSPLTPPNPLQLVNNPLASQAAAAAAAMGSIASSQAFGNALSSLQGVTGQLVTNAQGQIIGTIPLMPNPGPSSQAASGTQGLQVQPITPQLLTNAQGQIIATVIGNQILPVINTQGITLSPIKPGQQLHQSSQTSVGQAGTQGNLLHLAHGQAATSHSPVRQASSSSSSSSSSSALSVGQLVSNPQTAAGEVDGVNLEEIREFAKAFKIRRLSLGLTQTQVGQALSATEGPAYSQSAICRHTILRSHFFLPQEAQENTIASSLTAKLNPGLLYPARFEKLDITPKSAQKIKPVLERWMAEAEARHRAGMQNLTEFIGSEPSKKRKRRTSFTPQALEILNAHFEKNTHPSGQEMTEIAEKLNYDREVVRVWFCNKRQALKNTIKRLKQHEPTSAAPLEPLADSPEENC</sequence>
<name>PO6F2_MOUSE</name>
<comment type="function">
    <text evidence="1">Probable transcription factor likely to be involved in early steps in the differentiation of amacrine and ganglion cells. Recognizes and binds to the DNA sequence 5'-ATGCAAAT-3' (By similarity).</text>
</comment>
<comment type="subcellular location">
    <subcellularLocation>
        <location evidence="2 3">Nucleus</location>
    </subcellularLocation>
</comment>
<comment type="tissue specificity">
    <text evidence="5">Expressed in kidney, heart, muscle, spleen and ovary, but not in lung.</text>
</comment>
<comment type="developmental stage">
    <text evidence="5">At 18 dpc, expressed in kidney, adrenal gland, heart, stomach, muscle and eye, but not in lung and skin.</text>
</comment>
<comment type="similarity">
    <text evidence="6">Belongs to the POU transcription factor family. Class-6 subfamily.</text>
</comment>
<proteinExistence type="evidence at transcript level"/>